<dbReference type="EC" id="1.1.1.49" evidence="1"/>
<dbReference type="EMBL" id="AL123456">
    <property type="protein sequence ID" value="CCP44206.1"/>
    <property type="molecule type" value="Genomic_DNA"/>
</dbReference>
<dbReference type="PIR" id="B70917">
    <property type="entry name" value="B70917"/>
</dbReference>
<dbReference type="RefSeq" id="NP_215963.1">
    <property type="nucleotide sequence ID" value="NC_000962.3"/>
</dbReference>
<dbReference type="RefSeq" id="WP_003407443.1">
    <property type="nucleotide sequence ID" value="NZ_NVQJ01000071.1"/>
</dbReference>
<dbReference type="SMR" id="P9WN73"/>
<dbReference type="FunCoup" id="P9WN73">
    <property type="interactions" value="306"/>
</dbReference>
<dbReference type="STRING" id="83332.Rv1447c"/>
<dbReference type="PaxDb" id="83332-Rv1447c"/>
<dbReference type="GeneID" id="886614"/>
<dbReference type="KEGG" id="mtu:Rv1447c"/>
<dbReference type="KEGG" id="mtv:RVBD_1447c"/>
<dbReference type="TubercuList" id="Rv1447c"/>
<dbReference type="eggNOG" id="COG0364">
    <property type="taxonomic scope" value="Bacteria"/>
</dbReference>
<dbReference type="InParanoid" id="P9WN73"/>
<dbReference type="OrthoDB" id="9802739at2"/>
<dbReference type="PhylomeDB" id="P9WN73"/>
<dbReference type="UniPathway" id="UPA00115">
    <property type="reaction ID" value="UER00408"/>
</dbReference>
<dbReference type="Proteomes" id="UP000001584">
    <property type="component" value="Chromosome"/>
</dbReference>
<dbReference type="GO" id="GO:0005829">
    <property type="term" value="C:cytosol"/>
    <property type="evidence" value="ECO:0000318"/>
    <property type="project" value="GO_Central"/>
</dbReference>
<dbReference type="GO" id="GO:0005886">
    <property type="term" value="C:plasma membrane"/>
    <property type="evidence" value="ECO:0007005"/>
    <property type="project" value="MTBBASE"/>
</dbReference>
<dbReference type="GO" id="GO:0004345">
    <property type="term" value="F:glucose-6-phosphate dehydrogenase activity"/>
    <property type="evidence" value="ECO:0000318"/>
    <property type="project" value="GO_Central"/>
</dbReference>
<dbReference type="GO" id="GO:0050661">
    <property type="term" value="F:NADP binding"/>
    <property type="evidence" value="ECO:0007669"/>
    <property type="project" value="UniProtKB-UniRule"/>
</dbReference>
<dbReference type="GO" id="GO:0006006">
    <property type="term" value="P:glucose metabolic process"/>
    <property type="evidence" value="ECO:0000318"/>
    <property type="project" value="GO_Central"/>
</dbReference>
<dbReference type="GO" id="GO:0009051">
    <property type="term" value="P:pentose-phosphate shunt, oxidative branch"/>
    <property type="evidence" value="ECO:0000318"/>
    <property type="project" value="GO_Central"/>
</dbReference>
<dbReference type="FunFam" id="3.30.360.10:FF:000011">
    <property type="entry name" value="Glucose-6-phosphate 1-dehydrogenase"/>
    <property type="match status" value="1"/>
</dbReference>
<dbReference type="Gene3D" id="3.30.360.10">
    <property type="entry name" value="Dihydrodipicolinate Reductase, domain 2"/>
    <property type="match status" value="1"/>
</dbReference>
<dbReference type="Gene3D" id="3.40.50.720">
    <property type="entry name" value="NAD(P)-binding Rossmann-like Domain"/>
    <property type="match status" value="1"/>
</dbReference>
<dbReference type="HAMAP" id="MF_00966">
    <property type="entry name" value="G6PD"/>
    <property type="match status" value="1"/>
</dbReference>
<dbReference type="InterPro" id="IPR001282">
    <property type="entry name" value="G6P_DH"/>
</dbReference>
<dbReference type="InterPro" id="IPR019796">
    <property type="entry name" value="G6P_DH_AS"/>
</dbReference>
<dbReference type="InterPro" id="IPR022675">
    <property type="entry name" value="G6P_DH_C"/>
</dbReference>
<dbReference type="InterPro" id="IPR022674">
    <property type="entry name" value="G6P_DH_NAD-bd"/>
</dbReference>
<dbReference type="InterPro" id="IPR036291">
    <property type="entry name" value="NAD(P)-bd_dom_sf"/>
</dbReference>
<dbReference type="NCBIfam" id="TIGR00871">
    <property type="entry name" value="zwf"/>
    <property type="match status" value="1"/>
</dbReference>
<dbReference type="PANTHER" id="PTHR23429:SF0">
    <property type="entry name" value="GLUCOSE-6-PHOSPHATE 1-DEHYDROGENASE"/>
    <property type="match status" value="1"/>
</dbReference>
<dbReference type="PANTHER" id="PTHR23429">
    <property type="entry name" value="GLUCOSE-6-PHOSPHATE 1-DEHYDROGENASE G6PD"/>
    <property type="match status" value="1"/>
</dbReference>
<dbReference type="Pfam" id="PF02781">
    <property type="entry name" value="G6PD_C"/>
    <property type="match status" value="1"/>
</dbReference>
<dbReference type="Pfam" id="PF00479">
    <property type="entry name" value="G6PD_N"/>
    <property type="match status" value="1"/>
</dbReference>
<dbReference type="PIRSF" id="PIRSF000110">
    <property type="entry name" value="G6PD"/>
    <property type="match status" value="1"/>
</dbReference>
<dbReference type="PRINTS" id="PR00079">
    <property type="entry name" value="G6PDHDRGNASE"/>
</dbReference>
<dbReference type="SUPFAM" id="SSF55347">
    <property type="entry name" value="Glyceraldehyde-3-phosphate dehydrogenase-like, C-terminal domain"/>
    <property type="match status" value="1"/>
</dbReference>
<dbReference type="SUPFAM" id="SSF51735">
    <property type="entry name" value="NAD(P)-binding Rossmann-fold domains"/>
    <property type="match status" value="1"/>
</dbReference>
<dbReference type="PROSITE" id="PS00069">
    <property type="entry name" value="G6P_DEHYDROGENASE"/>
    <property type="match status" value="1"/>
</dbReference>
<accession>P9WN73</accession>
<accession>L0T6P1</accession>
<accession>O08407</accession>
<accession>P0A584</accession>
<organism>
    <name type="scientific">Mycobacterium tuberculosis (strain ATCC 25618 / H37Rv)</name>
    <dbReference type="NCBI Taxonomy" id="83332"/>
    <lineage>
        <taxon>Bacteria</taxon>
        <taxon>Bacillati</taxon>
        <taxon>Actinomycetota</taxon>
        <taxon>Actinomycetes</taxon>
        <taxon>Mycobacteriales</taxon>
        <taxon>Mycobacteriaceae</taxon>
        <taxon>Mycobacterium</taxon>
        <taxon>Mycobacterium tuberculosis complex</taxon>
    </lineage>
</organism>
<evidence type="ECO:0000255" key="1">
    <source>
        <dbReference type="HAMAP-Rule" id="MF_00966"/>
    </source>
</evidence>
<reference key="1">
    <citation type="journal article" date="1998" name="Nature">
        <title>Deciphering the biology of Mycobacterium tuberculosis from the complete genome sequence.</title>
        <authorList>
            <person name="Cole S.T."/>
            <person name="Brosch R."/>
            <person name="Parkhill J."/>
            <person name="Garnier T."/>
            <person name="Churcher C.M."/>
            <person name="Harris D.E."/>
            <person name="Gordon S.V."/>
            <person name="Eiglmeier K."/>
            <person name="Gas S."/>
            <person name="Barry C.E. III"/>
            <person name="Tekaia F."/>
            <person name="Badcock K."/>
            <person name="Basham D."/>
            <person name="Brown D."/>
            <person name="Chillingworth T."/>
            <person name="Connor R."/>
            <person name="Davies R.M."/>
            <person name="Devlin K."/>
            <person name="Feltwell T."/>
            <person name="Gentles S."/>
            <person name="Hamlin N."/>
            <person name="Holroyd S."/>
            <person name="Hornsby T."/>
            <person name="Jagels K."/>
            <person name="Krogh A."/>
            <person name="McLean J."/>
            <person name="Moule S."/>
            <person name="Murphy L.D."/>
            <person name="Oliver S."/>
            <person name="Osborne J."/>
            <person name="Quail M.A."/>
            <person name="Rajandream M.A."/>
            <person name="Rogers J."/>
            <person name="Rutter S."/>
            <person name="Seeger K."/>
            <person name="Skelton S."/>
            <person name="Squares S."/>
            <person name="Squares R."/>
            <person name="Sulston J.E."/>
            <person name="Taylor K."/>
            <person name="Whitehead S."/>
            <person name="Barrell B.G."/>
        </authorList>
    </citation>
    <scope>NUCLEOTIDE SEQUENCE [LARGE SCALE GENOMIC DNA]</scope>
    <source>
        <strain>ATCC 25618 / H37Rv</strain>
    </source>
</reference>
<reference key="2">
    <citation type="journal article" date="2011" name="Mol. Cell. Proteomics">
        <title>Proteogenomic analysis of Mycobacterium tuberculosis by high resolution mass spectrometry.</title>
        <authorList>
            <person name="Kelkar D.S."/>
            <person name="Kumar D."/>
            <person name="Kumar P."/>
            <person name="Balakrishnan L."/>
            <person name="Muthusamy B."/>
            <person name="Yadav A.K."/>
            <person name="Shrivastava P."/>
            <person name="Marimuthu A."/>
            <person name="Anand S."/>
            <person name="Sundaram H."/>
            <person name="Kingsbury R."/>
            <person name="Harsha H.C."/>
            <person name="Nair B."/>
            <person name="Prasad T.S."/>
            <person name="Chauhan D.S."/>
            <person name="Katoch K."/>
            <person name="Katoch V.M."/>
            <person name="Kumar P."/>
            <person name="Chaerkady R."/>
            <person name="Ramachandran S."/>
            <person name="Dash D."/>
            <person name="Pandey A."/>
        </authorList>
    </citation>
    <scope>IDENTIFICATION BY MASS SPECTROMETRY [LARGE SCALE ANALYSIS]</scope>
    <source>
        <strain>ATCC 25618 / H37Rv</strain>
    </source>
</reference>
<protein>
    <recommendedName>
        <fullName evidence="1">Glucose-6-phosphate 1-dehydrogenase 2</fullName>
        <shortName evidence="1">G6PD 2</shortName>
        <ecNumber evidence="1">1.1.1.49</ecNumber>
    </recommendedName>
</protein>
<name>G6PD2_MYCTU</name>
<gene>
    <name evidence="1" type="primary">zwf2</name>
    <name type="synonym">zwf</name>
    <name type="ordered locus">Rv1447c</name>
    <name type="ORF">MTCY493.07</name>
</gene>
<comment type="function">
    <text evidence="1">Catalyzes the oxidation of glucose 6-phosphate to 6-phosphogluconolactone.</text>
</comment>
<comment type="catalytic activity">
    <reaction evidence="1">
        <text>D-glucose 6-phosphate + NADP(+) = 6-phospho-D-glucono-1,5-lactone + NADPH + H(+)</text>
        <dbReference type="Rhea" id="RHEA:15841"/>
        <dbReference type="ChEBI" id="CHEBI:15378"/>
        <dbReference type="ChEBI" id="CHEBI:57783"/>
        <dbReference type="ChEBI" id="CHEBI:57955"/>
        <dbReference type="ChEBI" id="CHEBI:58349"/>
        <dbReference type="ChEBI" id="CHEBI:61548"/>
        <dbReference type="EC" id="1.1.1.49"/>
    </reaction>
</comment>
<comment type="pathway">
    <text evidence="1">Carbohydrate degradation; pentose phosphate pathway; D-ribulose 5-phosphate from D-glucose 6-phosphate (oxidative stage): step 1/3.</text>
</comment>
<comment type="similarity">
    <text evidence="1">Belongs to the glucose-6-phosphate dehydrogenase family.</text>
</comment>
<feature type="chain" id="PRO_0000068126" description="Glucose-6-phosphate 1-dehydrogenase 2">
    <location>
        <begin position="1"/>
        <end position="514"/>
    </location>
</feature>
<feature type="active site" description="Proton acceptor" evidence="1">
    <location>
        <position position="268"/>
    </location>
</feature>
<feature type="binding site" evidence="1">
    <location>
        <position position="69"/>
    </location>
    <ligand>
        <name>NADP(+)</name>
        <dbReference type="ChEBI" id="CHEBI:58349"/>
    </ligand>
</feature>
<feature type="binding site" evidence="1">
    <location>
        <position position="176"/>
    </location>
    <ligand>
        <name>NADP(+)</name>
        <dbReference type="ChEBI" id="CHEBI:58349"/>
    </ligand>
</feature>
<feature type="binding site" evidence="1">
    <location>
        <position position="206"/>
    </location>
    <ligand>
        <name>substrate</name>
    </ligand>
</feature>
<feature type="binding site" evidence="1">
    <location>
        <position position="210"/>
    </location>
    <ligand>
        <name>substrate</name>
    </ligand>
</feature>
<feature type="binding site" evidence="1">
    <location>
        <position position="244"/>
    </location>
    <ligand>
        <name>substrate</name>
    </ligand>
</feature>
<feature type="binding site" evidence="1">
    <location>
        <position position="263"/>
    </location>
    <ligand>
        <name>substrate</name>
    </ligand>
</feature>
<feature type="binding site" evidence="1">
    <location>
        <position position="366"/>
    </location>
    <ligand>
        <name>substrate</name>
    </ligand>
</feature>
<keyword id="KW-0119">Carbohydrate metabolism</keyword>
<keyword id="KW-0313">Glucose metabolism</keyword>
<keyword id="KW-0521">NADP</keyword>
<keyword id="KW-0560">Oxidoreductase</keyword>
<keyword id="KW-1185">Reference proteome</keyword>
<sequence>MKPAHAAASWRNPLRDKRDKRLPRIAGPCGMVIFGVTGDLARKKVMPAVYDLANRGLLPPTFSLVGFARRDWSTQDFGQVVYNAVQEHCRTPFRQQNWDRLAEGFRFVPGTFDDDDAFAQLAETLEKLDAERGTGGNHAFYLAIPPKSFPVVCEQLHKSGLARPQGDRWSRVVIEKPFGHDLASARELNKAVNAVFPEEAVFRIDHYLGKETVQNILALRFANQLFDPIWNAHYVDHVQITMAEDIGLGGRAGYYDGIGAARDVIQNHLMQLLALTAMEEPVSFHPAALQAEKIKVLSATRLAEPLDQTTSRGQYAAGWQGGEKVVGLLDEEGFAEDSTTETFAAITLEVDTRRWAGVPFYLRTGKRLGRRVTEIALVFRRAPHLPFDATMTDELGTNAMVIRVQPDEGVTLRFGSKVPGTAMEVRDVNMDFSYGSAFAEDSPEAYERLILDVLLGEPSLFPVNAEVELAWEILDPALEHWAAHGTPDAYEAGTWGPESSLEMLRRTGREWRRP</sequence>
<proteinExistence type="evidence at protein level"/>